<protein>
    <recommendedName>
        <fullName evidence="1">Lipoyl synthase, mitochondrial</fullName>
        <ecNumber evidence="1">2.8.1.8</ecNumber>
    </recommendedName>
    <alternativeName>
        <fullName evidence="1">Lipoate synthase</fullName>
        <shortName evidence="1">LS</shortName>
        <shortName evidence="1">Lip-syn</shortName>
    </alternativeName>
    <alternativeName>
        <fullName evidence="1">Lipoic acid synthase</fullName>
    </alternativeName>
</protein>
<feature type="chain" id="PRO_0000398281" description="Lipoyl synthase, mitochondrial">
    <location>
        <begin position="1"/>
        <end position="385"/>
    </location>
</feature>
<feature type="domain" description="Radical SAM core" evidence="2">
    <location>
        <begin position="122"/>
        <end position="341"/>
    </location>
</feature>
<feature type="binding site" evidence="1">
    <location>
        <position position="107"/>
    </location>
    <ligand>
        <name>[4Fe-4S] cluster</name>
        <dbReference type="ChEBI" id="CHEBI:49883"/>
        <label>1</label>
    </ligand>
</feature>
<feature type="binding site" evidence="1">
    <location>
        <position position="112"/>
    </location>
    <ligand>
        <name>[4Fe-4S] cluster</name>
        <dbReference type="ChEBI" id="CHEBI:49883"/>
        <label>1</label>
    </ligand>
</feature>
<feature type="binding site" evidence="1">
    <location>
        <position position="118"/>
    </location>
    <ligand>
        <name>[4Fe-4S] cluster</name>
        <dbReference type="ChEBI" id="CHEBI:49883"/>
        <label>1</label>
    </ligand>
</feature>
<feature type="binding site" evidence="1">
    <location>
        <position position="137"/>
    </location>
    <ligand>
        <name>[4Fe-4S] cluster</name>
        <dbReference type="ChEBI" id="CHEBI:49883"/>
        <label>2</label>
        <note>4Fe-4S-S-AdoMet</note>
    </ligand>
</feature>
<feature type="binding site" evidence="1">
    <location>
        <position position="141"/>
    </location>
    <ligand>
        <name>[4Fe-4S] cluster</name>
        <dbReference type="ChEBI" id="CHEBI:49883"/>
        <label>2</label>
        <note>4Fe-4S-S-AdoMet</note>
    </ligand>
</feature>
<feature type="binding site" evidence="1">
    <location>
        <position position="144"/>
    </location>
    <ligand>
        <name>[4Fe-4S] cluster</name>
        <dbReference type="ChEBI" id="CHEBI:49883"/>
        <label>2</label>
        <note>4Fe-4S-S-AdoMet</note>
    </ligand>
</feature>
<feature type="binding site" evidence="1">
    <location>
        <position position="352"/>
    </location>
    <ligand>
        <name>[4Fe-4S] cluster</name>
        <dbReference type="ChEBI" id="CHEBI:49883"/>
        <label>1</label>
    </ligand>
</feature>
<keyword id="KW-0004">4Fe-4S</keyword>
<keyword id="KW-0408">Iron</keyword>
<keyword id="KW-0411">Iron-sulfur</keyword>
<keyword id="KW-0479">Metal-binding</keyword>
<keyword id="KW-0496">Mitochondrion</keyword>
<keyword id="KW-1185">Reference proteome</keyword>
<keyword id="KW-0949">S-adenosyl-L-methionine</keyword>
<keyword id="KW-0808">Transferase</keyword>
<sequence>MVPVRGQITAFRCSQNPTKTIWRTLATAEPPKPKRKRTMFTDKLNQGPSFADFVSGKASNMTIDPLEAARQDPDQRLPSWLKVPIPKGKSFHTLKKDVRELKLATVCEEAKCPNIGECWGGKKSEATATIMLMGDTCTRGCRFCSVKTSRKPAPPDPMEPENTAEAISRWGLGYVVLTTVDRDDLVDGGAHHLAETVRKIKEKAPQILVEVLGGDFRGDLDMASVLARSGLDVYAHNIETVEDLTPHVRDRRATYRQSLSILQRAKETKPSLVTKTSMMLGFGETDEQIMQTLRDLREIKCDVVTFGQYMRPTKRHMKVVEYVTPEKFDYWRDTALKMGFLYVASGPLVRSSYKAGEAFIENVIRKRNHNVGETPRLESASAAQL</sequence>
<reference key="1">
    <citation type="journal article" date="2009" name="Nature">
        <title>Evolution of pathogenicity and sexual reproduction in eight Candida genomes.</title>
        <authorList>
            <person name="Butler G."/>
            <person name="Rasmussen M.D."/>
            <person name="Lin M.F."/>
            <person name="Santos M.A.S."/>
            <person name="Sakthikumar S."/>
            <person name="Munro C.A."/>
            <person name="Rheinbay E."/>
            <person name="Grabherr M."/>
            <person name="Forche A."/>
            <person name="Reedy J.L."/>
            <person name="Agrafioti I."/>
            <person name="Arnaud M.B."/>
            <person name="Bates S."/>
            <person name="Brown A.J.P."/>
            <person name="Brunke S."/>
            <person name="Costanzo M.C."/>
            <person name="Fitzpatrick D.A."/>
            <person name="de Groot P.W.J."/>
            <person name="Harris D."/>
            <person name="Hoyer L.L."/>
            <person name="Hube B."/>
            <person name="Klis F.M."/>
            <person name="Kodira C."/>
            <person name="Lennard N."/>
            <person name="Logue M.E."/>
            <person name="Martin R."/>
            <person name="Neiman A.M."/>
            <person name="Nikolaou E."/>
            <person name="Quail M.A."/>
            <person name="Quinn J."/>
            <person name="Santos M.C."/>
            <person name="Schmitzberger F.F."/>
            <person name="Sherlock G."/>
            <person name="Shah P."/>
            <person name="Silverstein K.A.T."/>
            <person name="Skrzypek M.S."/>
            <person name="Soll D."/>
            <person name="Staggs R."/>
            <person name="Stansfield I."/>
            <person name="Stumpf M.P.H."/>
            <person name="Sudbery P.E."/>
            <person name="Srikantha T."/>
            <person name="Zeng Q."/>
            <person name="Berman J."/>
            <person name="Berriman M."/>
            <person name="Heitman J."/>
            <person name="Gow N.A.R."/>
            <person name="Lorenz M.C."/>
            <person name="Birren B.W."/>
            <person name="Kellis M."/>
            <person name="Cuomo C.A."/>
        </authorList>
    </citation>
    <scope>NUCLEOTIDE SEQUENCE [LARGE SCALE GENOMIC DNA]</scope>
    <source>
        <strain>ATCC 6260 / CBS 566 / DSM 6381 / JCM 1539 / NBRC 10279 / NRRL Y-324</strain>
    </source>
</reference>
<accession>A5DGI1</accession>
<organism>
    <name type="scientific">Meyerozyma guilliermondii (strain ATCC 6260 / CBS 566 / DSM 6381 / JCM 1539 / NBRC 10279 / NRRL Y-324)</name>
    <name type="common">Yeast</name>
    <name type="synonym">Candida guilliermondii</name>
    <dbReference type="NCBI Taxonomy" id="294746"/>
    <lineage>
        <taxon>Eukaryota</taxon>
        <taxon>Fungi</taxon>
        <taxon>Dikarya</taxon>
        <taxon>Ascomycota</taxon>
        <taxon>Saccharomycotina</taxon>
        <taxon>Pichiomycetes</taxon>
        <taxon>Debaryomycetaceae</taxon>
        <taxon>Meyerozyma</taxon>
    </lineage>
</organism>
<evidence type="ECO:0000255" key="1">
    <source>
        <dbReference type="HAMAP-Rule" id="MF_03123"/>
    </source>
</evidence>
<evidence type="ECO:0000255" key="2">
    <source>
        <dbReference type="PROSITE-ProRule" id="PRU01266"/>
    </source>
</evidence>
<proteinExistence type="inferred from homology"/>
<gene>
    <name type="ORF">PGUG_02382</name>
</gene>
<comment type="function">
    <text evidence="1">Catalyzes the radical-mediated insertion of two sulfur atoms into the C-6 and C-8 positions of the octanoyl moiety bound to the lipoyl domains of lipoate-dependent enzymes, thereby converting the octanoylated domains into lipoylated derivatives.</text>
</comment>
<comment type="catalytic activity">
    <reaction evidence="1">
        <text>[[Fe-S] cluster scaffold protein carrying a second [4Fe-4S](2+) cluster] + N(6)-octanoyl-L-lysyl-[protein] + 2 oxidized [2Fe-2S]-[ferredoxin] + 2 S-adenosyl-L-methionine + 4 H(+) = [[Fe-S] cluster scaffold protein] + N(6)-[(R)-dihydrolipoyl]-L-lysyl-[protein] + 4 Fe(3+) + 2 hydrogen sulfide + 2 5'-deoxyadenosine + 2 L-methionine + 2 reduced [2Fe-2S]-[ferredoxin]</text>
        <dbReference type="Rhea" id="RHEA:16585"/>
        <dbReference type="Rhea" id="RHEA-COMP:9928"/>
        <dbReference type="Rhea" id="RHEA-COMP:10000"/>
        <dbReference type="Rhea" id="RHEA-COMP:10001"/>
        <dbReference type="Rhea" id="RHEA-COMP:10475"/>
        <dbReference type="Rhea" id="RHEA-COMP:14568"/>
        <dbReference type="Rhea" id="RHEA-COMP:14569"/>
        <dbReference type="ChEBI" id="CHEBI:15378"/>
        <dbReference type="ChEBI" id="CHEBI:17319"/>
        <dbReference type="ChEBI" id="CHEBI:29034"/>
        <dbReference type="ChEBI" id="CHEBI:29919"/>
        <dbReference type="ChEBI" id="CHEBI:33722"/>
        <dbReference type="ChEBI" id="CHEBI:33737"/>
        <dbReference type="ChEBI" id="CHEBI:33738"/>
        <dbReference type="ChEBI" id="CHEBI:57844"/>
        <dbReference type="ChEBI" id="CHEBI:59789"/>
        <dbReference type="ChEBI" id="CHEBI:78809"/>
        <dbReference type="ChEBI" id="CHEBI:83100"/>
        <dbReference type="EC" id="2.8.1.8"/>
    </reaction>
</comment>
<comment type="cofactor">
    <cofactor evidence="1">
        <name>[4Fe-4S] cluster</name>
        <dbReference type="ChEBI" id="CHEBI:49883"/>
    </cofactor>
    <text evidence="1">Binds 2 [4Fe-4S] clusters per subunit. One cluster is coordinated with 3 cysteines and an exchangeable S-adenosyl-L-methionine.</text>
</comment>
<comment type="pathway">
    <text evidence="1">Protein modification; protein lipoylation via endogenous pathway; protein N(6)-(lipoyl)lysine from octanoyl-[acyl-carrier-protein]: step 2/2.</text>
</comment>
<comment type="subcellular location">
    <subcellularLocation>
        <location evidence="1">Mitochondrion</location>
    </subcellularLocation>
</comment>
<comment type="miscellaneous">
    <text evidence="1">This protein may be expected to contain an N-terminal transit peptide but none has been predicted.</text>
</comment>
<comment type="similarity">
    <text evidence="1">Belongs to the radical SAM superfamily. Lipoyl synthase family.</text>
</comment>
<name>LIPA_PICGU</name>
<dbReference type="EC" id="2.8.1.8" evidence="1"/>
<dbReference type="EMBL" id="CH408157">
    <property type="protein sequence ID" value="EDK38284.2"/>
    <property type="molecule type" value="Genomic_DNA"/>
</dbReference>
<dbReference type="RefSeq" id="XP_001484653.2">
    <property type="nucleotide sequence ID" value="XM_001484603.1"/>
</dbReference>
<dbReference type="SMR" id="A5DGI1"/>
<dbReference type="FunCoup" id="A5DGI1">
    <property type="interactions" value="589"/>
</dbReference>
<dbReference type="STRING" id="294746.A5DGI1"/>
<dbReference type="GeneID" id="5126776"/>
<dbReference type="KEGG" id="pgu:PGUG_02382"/>
<dbReference type="VEuPathDB" id="FungiDB:PGUG_02382"/>
<dbReference type="eggNOG" id="KOG2672">
    <property type="taxonomic scope" value="Eukaryota"/>
</dbReference>
<dbReference type="HOGENOM" id="CLU_033144_2_0_1"/>
<dbReference type="InParanoid" id="A5DGI1"/>
<dbReference type="OMA" id="PYCDIDF"/>
<dbReference type="OrthoDB" id="3231at2759"/>
<dbReference type="UniPathway" id="UPA00538">
    <property type="reaction ID" value="UER00593"/>
</dbReference>
<dbReference type="Proteomes" id="UP000001997">
    <property type="component" value="Unassembled WGS sequence"/>
</dbReference>
<dbReference type="GO" id="GO:0005739">
    <property type="term" value="C:mitochondrion"/>
    <property type="evidence" value="ECO:0007669"/>
    <property type="project" value="UniProtKB-SubCell"/>
</dbReference>
<dbReference type="GO" id="GO:0051539">
    <property type="term" value="F:4 iron, 4 sulfur cluster binding"/>
    <property type="evidence" value="ECO:0007669"/>
    <property type="project" value="UniProtKB-UniRule"/>
</dbReference>
<dbReference type="GO" id="GO:0016992">
    <property type="term" value="F:lipoate synthase activity"/>
    <property type="evidence" value="ECO:0007669"/>
    <property type="project" value="UniProtKB-UniRule"/>
</dbReference>
<dbReference type="GO" id="GO:0046872">
    <property type="term" value="F:metal ion binding"/>
    <property type="evidence" value="ECO:0007669"/>
    <property type="project" value="UniProtKB-KW"/>
</dbReference>
<dbReference type="CDD" id="cd01335">
    <property type="entry name" value="Radical_SAM"/>
    <property type="match status" value="1"/>
</dbReference>
<dbReference type="FunFam" id="3.20.20.70:FF:000036">
    <property type="entry name" value="Lipoyl synthase, mitochondrial"/>
    <property type="match status" value="1"/>
</dbReference>
<dbReference type="Gene3D" id="3.20.20.70">
    <property type="entry name" value="Aldolase class I"/>
    <property type="match status" value="1"/>
</dbReference>
<dbReference type="HAMAP" id="MF_00206">
    <property type="entry name" value="Lipoyl_synth"/>
    <property type="match status" value="1"/>
</dbReference>
<dbReference type="InterPro" id="IPR013785">
    <property type="entry name" value="Aldolase_TIM"/>
</dbReference>
<dbReference type="InterPro" id="IPR006638">
    <property type="entry name" value="Elp3/MiaA/NifB-like_rSAM"/>
</dbReference>
<dbReference type="InterPro" id="IPR031691">
    <property type="entry name" value="LIAS_N"/>
</dbReference>
<dbReference type="InterPro" id="IPR003698">
    <property type="entry name" value="Lipoyl_synth"/>
</dbReference>
<dbReference type="InterPro" id="IPR007197">
    <property type="entry name" value="rSAM"/>
</dbReference>
<dbReference type="NCBIfam" id="TIGR00510">
    <property type="entry name" value="lipA"/>
    <property type="match status" value="1"/>
</dbReference>
<dbReference type="NCBIfam" id="NF004019">
    <property type="entry name" value="PRK05481.1"/>
    <property type="match status" value="1"/>
</dbReference>
<dbReference type="NCBIfam" id="NF009544">
    <property type="entry name" value="PRK12928.1"/>
    <property type="match status" value="1"/>
</dbReference>
<dbReference type="PANTHER" id="PTHR10949">
    <property type="entry name" value="LIPOYL SYNTHASE"/>
    <property type="match status" value="1"/>
</dbReference>
<dbReference type="PANTHER" id="PTHR10949:SF0">
    <property type="entry name" value="LIPOYL SYNTHASE, MITOCHONDRIAL"/>
    <property type="match status" value="1"/>
</dbReference>
<dbReference type="Pfam" id="PF16881">
    <property type="entry name" value="LIAS_N"/>
    <property type="match status" value="1"/>
</dbReference>
<dbReference type="Pfam" id="PF04055">
    <property type="entry name" value="Radical_SAM"/>
    <property type="match status" value="1"/>
</dbReference>
<dbReference type="SFLD" id="SFLDF00271">
    <property type="entry name" value="lipoyl_synthase"/>
    <property type="match status" value="1"/>
</dbReference>
<dbReference type="SFLD" id="SFLDG01058">
    <property type="entry name" value="lipoyl_synthase_like"/>
    <property type="match status" value="1"/>
</dbReference>
<dbReference type="SMART" id="SM00729">
    <property type="entry name" value="Elp3"/>
    <property type="match status" value="1"/>
</dbReference>
<dbReference type="SUPFAM" id="SSF102114">
    <property type="entry name" value="Radical SAM enzymes"/>
    <property type="match status" value="1"/>
</dbReference>
<dbReference type="PROSITE" id="PS51918">
    <property type="entry name" value="RADICAL_SAM"/>
    <property type="match status" value="1"/>
</dbReference>